<dbReference type="EMBL" id="CP000409">
    <property type="protein sequence ID" value="ABV73940.1"/>
    <property type="status" value="ALT_INIT"/>
    <property type="molecule type" value="Genomic_DNA"/>
</dbReference>
<dbReference type="RefSeq" id="WP_041405291.1">
    <property type="nucleotide sequence ID" value="NC_009879.1"/>
</dbReference>
<dbReference type="SMR" id="A8F007"/>
<dbReference type="STRING" id="293613.A1E_05120"/>
<dbReference type="KEGG" id="rcm:A1E_05120"/>
<dbReference type="eggNOG" id="COG0712">
    <property type="taxonomic scope" value="Bacteria"/>
</dbReference>
<dbReference type="HOGENOM" id="CLU_085114_1_1_5"/>
<dbReference type="Proteomes" id="UP000007056">
    <property type="component" value="Chromosome"/>
</dbReference>
<dbReference type="GO" id="GO:0005886">
    <property type="term" value="C:plasma membrane"/>
    <property type="evidence" value="ECO:0007669"/>
    <property type="project" value="UniProtKB-SubCell"/>
</dbReference>
<dbReference type="GO" id="GO:0045259">
    <property type="term" value="C:proton-transporting ATP synthase complex"/>
    <property type="evidence" value="ECO:0007669"/>
    <property type="project" value="UniProtKB-KW"/>
</dbReference>
<dbReference type="GO" id="GO:0046933">
    <property type="term" value="F:proton-transporting ATP synthase activity, rotational mechanism"/>
    <property type="evidence" value="ECO:0007669"/>
    <property type="project" value="UniProtKB-UniRule"/>
</dbReference>
<dbReference type="Gene3D" id="1.10.520.20">
    <property type="entry name" value="N-terminal domain of the delta subunit of the F1F0-ATP synthase"/>
    <property type="match status" value="1"/>
</dbReference>
<dbReference type="HAMAP" id="MF_01416">
    <property type="entry name" value="ATP_synth_delta_bact"/>
    <property type="match status" value="1"/>
</dbReference>
<dbReference type="InterPro" id="IPR026015">
    <property type="entry name" value="ATP_synth_OSCP/delta_N_sf"/>
</dbReference>
<dbReference type="InterPro" id="IPR000711">
    <property type="entry name" value="ATPase_OSCP/dsu"/>
</dbReference>
<dbReference type="NCBIfam" id="TIGR01145">
    <property type="entry name" value="ATP_synt_delta"/>
    <property type="match status" value="1"/>
</dbReference>
<dbReference type="PANTHER" id="PTHR11910">
    <property type="entry name" value="ATP SYNTHASE DELTA CHAIN"/>
    <property type="match status" value="1"/>
</dbReference>
<dbReference type="Pfam" id="PF00213">
    <property type="entry name" value="OSCP"/>
    <property type="match status" value="1"/>
</dbReference>
<dbReference type="PRINTS" id="PR00125">
    <property type="entry name" value="ATPASEDELTA"/>
</dbReference>
<dbReference type="SUPFAM" id="SSF47928">
    <property type="entry name" value="N-terminal domain of the delta subunit of the F1F0-ATP synthase"/>
    <property type="match status" value="1"/>
</dbReference>
<sequence>MNKNNLIGNYTIALFNNAMVDNIQDKVFEEITSINSIITDNVDIREFLFSPIVNKNDKIKAINSLAKNTKINTIVYNFLLLLIKNFRMTILSDIISVFNKLLCESKNIKIVQVISANKLKPKEQEWIKSHIEKELNQKTEILFDIDSNIIGGIVIKYDSMLQDYSIKGSLDKITKVLKKVNINT</sequence>
<keyword id="KW-0066">ATP synthesis</keyword>
<keyword id="KW-0997">Cell inner membrane</keyword>
<keyword id="KW-1003">Cell membrane</keyword>
<keyword id="KW-0139">CF(1)</keyword>
<keyword id="KW-0375">Hydrogen ion transport</keyword>
<keyword id="KW-0406">Ion transport</keyword>
<keyword id="KW-0472">Membrane</keyword>
<keyword id="KW-0813">Transport</keyword>
<gene>
    <name evidence="1" type="primary">atpH</name>
    <name type="ordered locus">A1E_05120</name>
</gene>
<protein>
    <recommendedName>
        <fullName evidence="1">ATP synthase subunit delta</fullName>
    </recommendedName>
    <alternativeName>
        <fullName evidence="1">ATP synthase F(1) sector subunit delta</fullName>
    </alternativeName>
    <alternativeName>
        <fullName evidence="1">F-type ATPase subunit delta</fullName>
        <shortName evidence="1">F-ATPase subunit delta</shortName>
    </alternativeName>
</protein>
<feature type="chain" id="PRO_0000371101" description="ATP synthase subunit delta">
    <location>
        <begin position="1"/>
        <end position="184"/>
    </location>
</feature>
<evidence type="ECO:0000255" key="1">
    <source>
        <dbReference type="HAMAP-Rule" id="MF_01416"/>
    </source>
</evidence>
<evidence type="ECO:0000305" key="2"/>
<name>ATPD_RICCK</name>
<comment type="function">
    <text evidence="1">F(1)F(0) ATP synthase produces ATP from ADP in the presence of a proton or sodium gradient. F-type ATPases consist of two structural domains, F(1) containing the extramembraneous catalytic core and F(0) containing the membrane proton channel, linked together by a central stalk and a peripheral stalk. During catalysis, ATP synthesis in the catalytic domain of F(1) is coupled via a rotary mechanism of the central stalk subunits to proton translocation.</text>
</comment>
<comment type="function">
    <text evidence="1">This protein is part of the stalk that links CF(0) to CF(1). It either transmits conformational changes from CF(0) to CF(1) or is implicated in proton conduction.</text>
</comment>
<comment type="subunit">
    <text evidence="1">F-type ATPases have 2 components, F(1) - the catalytic core - and F(0) - the membrane proton channel. F(1) has five subunits: alpha(3), beta(3), gamma(1), delta(1), epsilon(1). F(0) has three main subunits: a(1), b(2) and c(10-14). The alpha and beta chains form an alternating ring which encloses part of the gamma chain. F(1) is attached to F(0) by a central stalk formed by the gamma and epsilon chains, while a peripheral stalk is formed by the delta and b chains.</text>
</comment>
<comment type="subcellular location">
    <subcellularLocation>
        <location evidence="1">Cell inner membrane</location>
        <topology evidence="1">Peripheral membrane protein</topology>
    </subcellularLocation>
</comment>
<comment type="similarity">
    <text evidence="1">Belongs to the ATPase delta chain family.</text>
</comment>
<comment type="sequence caution" evidence="2">
    <conflict type="erroneous initiation">
        <sequence resource="EMBL-CDS" id="ABV73940"/>
    </conflict>
</comment>
<proteinExistence type="inferred from homology"/>
<accession>A8F007</accession>
<reference key="1">
    <citation type="submission" date="2007-09" db="EMBL/GenBank/DDBJ databases">
        <title>Complete genome sequence of Rickettsia canadensis.</title>
        <authorList>
            <person name="Madan A."/>
            <person name="Fahey J."/>
            <person name="Helton E."/>
            <person name="Ketteman M."/>
            <person name="Madan A."/>
            <person name="Rodrigues S."/>
            <person name="Sanchez A."/>
            <person name="Whiting M."/>
            <person name="Dasch G."/>
            <person name="Eremeeva M."/>
        </authorList>
    </citation>
    <scope>NUCLEOTIDE SEQUENCE [LARGE SCALE GENOMIC DNA]</scope>
    <source>
        <strain>McKiel</strain>
    </source>
</reference>
<organism>
    <name type="scientific">Rickettsia canadensis (strain McKiel)</name>
    <dbReference type="NCBI Taxonomy" id="293613"/>
    <lineage>
        <taxon>Bacteria</taxon>
        <taxon>Pseudomonadati</taxon>
        <taxon>Pseudomonadota</taxon>
        <taxon>Alphaproteobacteria</taxon>
        <taxon>Rickettsiales</taxon>
        <taxon>Rickettsiaceae</taxon>
        <taxon>Rickettsieae</taxon>
        <taxon>Rickettsia</taxon>
        <taxon>belli group</taxon>
    </lineage>
</organism>